<protein>
    <recommendedName>
        <fullName evidence="1">Large ribosomal subunit protein uL2</fullName>
    </recommendedName>
    <alternativeName>
        <fullName evidence="3">50S ribosomal protein L2</fullName>
    </alternativeName>
</protein>
<evidence type="ECO:0000255" key="1">
    <source>
        <dbReference type="HAMAP-Rule" id="MF_01320"/>
    </source>
</evidence>
<evidence type="ECO:0000256" key="2">
    <source>
        <dbReference type="SAM" id="MobiDB-lite"/>
    </source>
</evidence>
<evidence type="ECO:0000305" key="3"/>
<keyword id="KW-0687">Ribonucleoprotein</keyword>
<keyword id="KW-0689">Ribosomal protein</keyword>
<keyword id="KW-0694">RNA-binding</keyword>
<keyword id="KW-0699">rRNA-binding</keyword>
<feature type="chain" id="PRO_0000237247" description="Large ribosomal subunit protein uL2">
    <location>
        <begin position="1"/>
        <end position="277"/>
    </location>
</feature>
<feature type="region of interest" description="Disordered" evidence="2">
    <location>
        <begin position="222"/>
        <end position="277"/>
    </location>
</feature>
<name>RL2_STRA1</name>
<sequence length="277" mass="30013">MGIKVYKPTTNGRRNMTSLDFAEITTNTPEKSLLVSLKNKAGRNNNGRITVRHQGGGHKRHYRLIDFKRNKDGVEAVVKTIEYDPNRTANIALVHYTDGVKAYILAPKGLEVGQRIISGPEADIKVGNALPLANIPVGTVIHNIELQPGKGAELIRAAGASAQVLGQEGKYVLVRLQSGEVRMILGTCRATIGTVGNEQQSLVNIGKAGRNRWKGVRPTVRGSVMNPNDHPHGGGEGKAPVGRKAPSTPWGKPALGLKTRNKKAKSDKLIVRRRNQK</sequence>
<accession>Q3K3W6</accession>
<reference key="1">
    <citation type="journal article" date="2005" name="Proc. Natl. Acad. Sci. U.S.A.">
        <title>Genome analysis of multiple pathogenic isolates of Streptococcus agalactiae: implications for the microbial 'pan-genome'.</title>
        <authorList>
            <person name="Tettelin H."/>
            <person name="Masignani V."/>
            <person name="Cieslewicz M.J."/>
            <person name="Donati C."/>
            <person name="Medini D."/>
            <person name="Ward N.L."/>
            <person name="Angiuoli S.V."/>
            <person name="Crabtree J."/>
            <person name="Jones A.L."/>
            <person name="Durkin A.S."/>
            <person name="DeBoy R.T."/>
            <person name="Davidsen T.M."/>
            <person name="Mora M."/>
            <person name="Scarselli M."/>
            <person name="Margarit y Ros I."/>
            <person name="Peterson J.D."/>
            <person name="Hauser C.R."/>
            <person name="Sundaram J.P."/>
            <person name="Nelson W.C."/>
            <person name="Madupu R."/>
            <person name="Brinkac L.M."/>
            <person name="Dodson R.J."/>
            <person name="Rosovitz M.J."/>
            <person name="Sullivan S.A."/>
            <person name="Daugherty S.C."/>
            <person name="Haft D.H."/>
            <person name="Selengut J."/>
            <person name="Gwinn M.L."/>
            <person name="Zhou L."/>
            <person name="Zafar N."/>
            <person name="Khouri H."/>
            <person name="Radune D."/>
            <person name="Dimitrov G."/>
            <person name="Watkins K."/>
            <person name="O'Connor K.J."/>
            <person name="Smith S."/>
            <person name="Utterback T.R."/>
            <person name="White O."/>
            <person name="Rubens C.E."/>
            <person name="Grandi G."/>
            <person name="Madoff L.C."/>
            <person name="Kasper D.L."/>
            <person name="Telford J.L."/>
            <person name="Wessels M.R."/>
            <person name="Rappuoli R."/>
            <person name="Fraser C.M."/>
        </authorList>
    </citation>
    <scope>NUCLEOTIDE SEQUENCE [LARGE SCALE GENOMIC DNA]</scope>
    <source>
        <strain>ATCC 27591 / A909 / CDC SS700</strain>
    </source>
</reference>
<comment type="function">
    <text evidence="1">One of the primary rRNA binding proteins. Required for association of the 30S and 50S subunits to form the 70S ribosome, for tRNA binding and peptide bond formation. It has been suggested to have peptidyltransferase activity; this is somewhat controversial. Makes several contacts with the 16S rRNA in the 70S ribosome.</text>
</comment>
<comment type="subunit">
    <text evidence="1">Part of the 50S ribosomal subunit. Forms a bridge to the 30S subunit in the 70S ribosome.</text>
</comment>
<comment type="similarity">
    <text evidence="1">Belongs to the universal ribosomal protein uL2 family.</text>
</comment>
<proteinExistence type="inferred from homology"/>
<dbReference type="EMBL" id="CP000114">
    <property type="protein sequence ID" value="ABA45821.1"/>
    <property type="molecule type" value="Genomic_DNA"/>
</dbReference>
<dbReference type="RefSeq" id="WP_000511737.1">
    <property type="nucleotide sequence ID" value="NC_007432.1"/>
</dbReference>
<dbReference type="SMR" id="Q3K3W6"/>
<dbReference type="KEGG" id="sak:SAK_0094"/>
<dbReference type="HOGENOM" id="CLU_036235_2_1_9"/>
<dbReference type="GO" id="GO:0015934">
    <property type="term" value="C:large ribosomal subunit"/>
    <property type="evidence" value="ECO:0007669"/>
    <property type="project" value="InterPro"/>
</dbReference>
<dbReference type="GO" id="GO:0019843">
    <property type="term" value="F:rRNA binding"/>
    <property type="evidence" value="ECO:0007669"/>
    <property type="project" value="UniProtKB-UniRule"/>
</dbReference>
<dbReference type="GO" id="GO:0003735">
    <property type="term" value="F:structural constituent of ribosome"/>
    <property type="evidence" value="ECO:0007669"/>
    <property type="project" value="InterPro"/>
</dbReference>
<dbReference type="GO" id="GO:0016740">
    <property type="term" value="F:transferase activity"/>
    <property type="evidence" value="ECO:0007669"/>
    <property type="project" value="InterPro"/>
</dbReference>
<dbReference type="GO" id="GO:0002181">
    <property type="term" value="P:cytoplasmic translation"/>
    <property type="evidence" value="ECO:0007669"/>
    <property type="project" value="TreeGrafter"/>
</dbReference>
<dbReference type="FunFam" id="2.30.30.30:FF:000001">
    <property type="entry name" value="50S ribosomal protein L2"/>
    <property type="match status" value="1"/>
</dbReference>
<dbReference type="FunFam" id="2.40.50.140:FF:000003">
    <property type="entry name" value="50S ribosomal protein L2"/>
    <property type="match status" value="1"/>
</dbReference>
<dbReference type="FunFam" id="4.10.950.10:FF:000001">
    <property type="entry name" value="50S ribosomal protein L2"/>
    <property type="match status" value="1"/>
</dbReference>
<dbReference type="Gene3D" id="2.30.30.30">
    <property type="match status" value="1"/>
</dbReference>
<dbReference type="Gene3D" id="2.40.50.140">
    <property type="entry name" value="Nucleic acid-binding proteins"/>
    <property type="match status" value="1"/>
</dbReference>
<dbReference type="Gene3D" id="4.10.950.10">
    <property type="entry name" value="Ribosomal protein L2, domain 3"/>
    <property type="match status" value="1"/>
</dbReference>
<dbReference type="HAMAP" id="MF_01320_B">
    <property type="entry name" value="Ribosomal_uL2_B"/>
    <property type="match status" value="1"/>
</dbReference>
<dbReference type="InterPro" id="IPR012340">
    <property type="entry name" value="NA-bd_OB-fold"/>
</dbReference>
<dbReference type="InterPro" id="IPR014722">
    <property type="entry name" value="Rib_uL2_dom2"/>
</dbReference>
<dbReference type="InterPro" id="IPR002171">
    <property type="entry name" value="Ribosomal_uL2"/>
</dbReference>
<dbReference type="InterPro" id="IPR005880">
    <property type="entry name" value="Ribosomal_uL2_bac/org-type"/>
</dbReference>
<dbReference type="InterPro" id="IPR022669">
    <property type="entry name" value="Ribosomal_uL2_C"/>
</dbReference>
<dbReference type="InterPro" id="IPR022671">
    <property type="entry name" value="Ribosomal_uL2_CS"/>
</dbReference>
<dbReference type="InterPro" id="IPR014726">
    <property type="entry name" value="Ribosomal_uL2_dom3"/>
</dbReference>
<dbReference type="InterPro" id="IPR022666">
    <property type="entry name" value="Ribosomal_uL2_RNA-bd_dom"/>
</dbReference>
<dbReference type="InterPro" id="IPR008991">
    <property type="entry name" value="Translation_prot_SH3-like_sf"/>
</dbReference>
<dbReference type="NCBIfam" id="TIGR01171">
    <property type="entry name" value="rplB_bact"/>
    <property type="match status" value="1"/>
</dbReference>
<dbReference type="PANTHER" id="PTHR13691:SF5">
    <property type="entry name" value="LARGE RIBOSOMAL SUBUNIT PROTEIN UL2M"/>
    <property type="match status" value="1"/>
</dbReference>
<dbReference type="PANTHER" id="PTHR13691">
    <property type="entry name" value="RIBOSOMAL PROTEIN L2"/>
    <property type="match status" value="1"/>
</dbReference>
<dbReference type="Pfam" id="PF00181">
    <property type="entry name" value="Ribosomal_L2"/>
    <property type="match status" value="1"/>
</dbReference>
<dbReference type="Pfam" id="PF03947">
    <property type="entry name" value="Ribosomal_L2_C"/>
    <property type="match status" value="1"/>
</dbReference>
<dbReference type="PIRSF" id="PIRSF002158">
    <property type="entry name" value="Ribosomal_L2"/>
    <property type="match status" value="1"/>
</dbReference>
<dbReference type="SMART" id="SM01383">
    <property type="entry name" value="Ribosomal_L2"/>
    <property type="match status" value="1"/>
</dbReference>
<dbReference type="SMART" id="SM01382">
    <property type="entry name" value="Ribosomal_L2_C"/>
    <property type="match status" value="1"/>
</dbReference>
<dbReference type="SUPFAM" id="SSF50249">
    <property type="entry name" value="Nucleic acid-binding proteins"/>
    <property type="match status" value="1"/>
</dbReference>
<dbReference type="SUPFAM" id="SSF50104">
    <property type="entry name" value="Translation proteins SH3-like domain"/>
    <property type="match status" value="1"/>
</dbReference>
<dbReference type="PROSITE" id="PS00467">
    <property type="entry name" value="RIBOSOMAL_L2"/>
    <property type="match status" value="1"/>
</dbReference>
<organism>
    <name type="scientific">Streptococcus agalactiae serotype Ia (strain ATCC 27591 / A909 / CDC SS700)</name>
    <dbReference type="NCBI Taxonomy" id="205921"/>
    <lineage>
        <taxon>Bacteria</taxon>
        <taxon>Bacillati</taxon>
        <taxon>Bacillota</taxon>
        <taxon>Bacilli</taxon>
        <taxon>Lactobacillales</taxon>
        <taxon>Streptococcaceae</taxon>
        <taxon>Streptococcus</taxon>
    </lineage>
</organism>
<gene>
    <name evidence="1" type="primary">rplB</name>
    <name type="ordered locus">SAK_0094</name>
</gene>